<accession>Q0G9W4</accession>
<proteinExistence type="inferred from homology"/>
<gene>
    <name evidence="1" type="primary">rps14</name>
</gene>
<comment type="function">
    <text evidence="1">Binds 16S rRNA, required for the assembly of 30S particles.</text>
</comment>
<comment type="subunit">
    <text evidence="1">Part of the 30S ribosomal subunit.</text>
</comment>
<comment type="subcellular location">
    <subcellularLocation>
        <location>Plastid</location>
        <location>Chloroplast</location>
    </subcellularLocation>
</comment>
<comment type="similarity">
    <text evidence="1">Belongs to the universal ribosomal protein uS14 family.</text>
</comment>
<name>RR14_DAUCA</name>
<geneLocation type="chloroplast"/>
<keyword id="KW-0150">Chloroplast</keyword>
<keyword id="KW-0934">Plastid</keyword>
<keyword id="KW-0687">Ribonucleoprotein</keyword>
<keyword id="KW-0689">Ribosomal protein</keyword>
<keyword id="KW-0694">RNA-binding</keyword>
<keyword id="KW-0699">rRNA-binding</keyword>
<organism>
    <name type="scientific">Daucus carota</name>
    <name type="common">Wild carrot</name>
    <dbReference type="NCBI Taxonomy" id="4039"/>
    <lineage>
        <taxon>Eukaryota</taxon>
        <taxon>Viridiplantae</taxon>
        <taxon>Streptophyta</taxon>
        <taxon>Embryophyta</taxon>
        <taxon>Tracheophyta</taxon>
        <taxon>Spermatophyta</taxon>
        <taxon>Magnoliopsida</taxon>
        <taxon>eudicotyledons</taxon>
        <taxon>Gunneridae</taxon>
        <taxon>Pentapetalae</taxon>
        <taxon>asterids</taxon>
        <taxon>campanulids</taxon>
        <taxon>Apiales</taxon>
        <taxon>Apiaceae</taxon>
        <taxon>Apioideae</taxon>
        <taxon>Scandiceae</taxon>
        <taxon>Daucinae</taxon>
        <taxon>Daucus</taxon>
        <taxon>Daucus sect. Daucus</taxon>
    </lineage>
</organism>
<sequence length="100" mass="11750">MARKGLIQRENKRQKLEQKYHSIRRSSKKEIRQVLSLSDKWEIYGKLQSPPRNSAPTRLHRRCFSTGRPRANYRDFGLSGQILREMVHACLLPGATRSSW</sequence>
<evidence type="ECO:0000255" key="1">
    <source>
        <dbReference type="HAMAP-Rule" id="MF_00537"/>
    </source>
</evidence>
<evidence type="ECO:0000256" key="2">
    <source>
        <dbReference type="SAM" id="MobiDB-lite"/>
    </source>
</evidence>
<evidence type="ECO:0000305" key="3"/>
<dbReference type="EMBL" id="DQ898156">
    <property type="protein sequence ID" value="ABI32422.1"/>
    <property type="molecule type" value="Genomic_DNA"/>
</dbReference>
<dbReference type="RefSeq" id="YP_740115.1">
    <property type="nucleotide sequence ID" value="NC_008325.1"/>
</dbReference>
<dbReference type="SMR" id="Q0G9W4"/>
<dbReference type="GeneID" id="4266733"/>
<dbReference type="OMA" id="RIKFRDL"/>
<dbReference type="GO" id="GO:0009507">
    <property type="term" value="C:chloroplast"/>
    <property type="evidence" value="ECO:0007669"/>
    <property type="project" value="UniProtKB-SubCell"/>
</dbReference>
<dbReference type="GO" id="GO:0015935">
    <property type="term" value="C:small ribosomal subunit"/>
    <property type="evidence" value="ECO:0007669"/>
    <property type="project" value="TreeGrafter"/>
</dbReference>
<dbReference type="GO" id="GO:0019843">
    <property type="term" value="F:rRNA binding"/>
    <property type="evidence" value="ECO:0007669"/>
    <property type="project" value="UniProtKB-UniRule"/>
</dbReference>
<dbReference type="GO" id="GO:0003735">
    <property type="term" value="F:structural constituent of ribosome"/>
    <property type="evidence" value="ECO:0007669"/>
    <property type="project" value="InterPro"/>
</dbReference>
<dbReference type="GO" id="GO:0006412">
    <property type="term" value="P:translation"/>
    <property type="evidence" value="ECO:0007669"/>
    <property type="project" value="UniProtKB-UniRule"/>
</dbReference>
<dbReference type="FunFam" id="1.10.287.1480:FF:000001">
    <property type="entry name" value="30S ribosomal protein S14"/>
    <property type="match status" value="1"/>
</dbReference>
<dbReference type="Gene3D" id="1.10.287.1480">
    <property type="match status" value="1"/>
</dbReference>
<dbReference type="HAMAP" id="MF_00537">
    <property type="entry name" value="Ribosomal_uS14_1"/>
    <property type="match status" value="1"/>
</dbReference>
<dbReference type="InterPro" id="IPR001209">
    <property type="entry name" value="Ribosomal_uS14"/>
</dbReference>
<dbReference type="InterPro" id="IPR023036">
    <property type="entry name" value="Ribosomal_uS14_bac/plastid"/>
</dbReference>
<dbReference type="InterPro" id="IPR018271">
    <property type="entry name" value="Ribosomal_uS14_CS"/>
</dbReference>
<dbReference type="NCBIfam" id="NF006477">
    <property type="entry name" value="PRK08881.1"/>
    <property type="match status" value="1"/>
</dbReference>
<dbReference type="PANTHER" id="PTHR19836">
    <property type="entry name" value="30S RIBOSOMAL PROTEIN S14"/>
    <property type="match status" value="1"/>
</dbReference>
<dbReference type="PANTHER" id="PTHR19836:SF19">
    <property type="entry name" value="SMALL RIBOSOMAL SUBUNIT PROTEIN US14M"/>
    <property type="match status" value="1"/>
</dbReference>
<dbReference type="Pfam" id="PF00253">
    <property type="entry name" value="Ribosomal_S14"/>
    <property type="match status" value="1"/>
</dbReference>
<dbReference type="SUPFAM" id="SSF57716">
    <property type="entry name" value="Glucocorticoid receptor-like (DNA-binding domain)"/>
    <property type="match status" value="1"/>
</dbReference>
<dbReference type="PROSITE" id="PS00527">
    <property type="entry name" value="RIBOSOMAL_S14"/>
    <property type="match status" value="1"/>
</dbReference>
<protein>
    <recommendedName>
        <fullName evidence="1">Small ribosomal subunit protein uS14c</fullName>
    </recommendedName>
    <alternativeName>
        <fullName evidence="3">30S ribosomal protein S14, chloroplastic</fullName>
    </alternativeName>
</protein>
<feature type="chain" id="PRO_0000276674" description="Small ribosomal subunit protein uS14c">
    <location>
        <begin position="1"/>
        <end position="100"/>
    </location>
</feature>
<feature type="region of interest" description="Disordered" evidence="2">
    <location>
        <begin position="1"/>
        <end position="22"/>
    </location>
</feature>
<feature type="compositionally biased region" description="Basic and acidic residues" evidence="2">
    <location>
        <begin position="7"/>
        <end position="20"/>
    </location>
</feature>
<reference key="1">
    <citation type="journal article" date="2006" name="BMC Genomics">
        <title>Complete plastid genome sequence of Daucus carota: implications for biotechnology and phylogeny of angiosperms.</title>
        <authorList>
            <person name="Ruhlman T."/>
            <person name="Lee S.-B."/>
            <person name="Jansen R.K."/>
            <person name="Hostetler J.B."/>
            <person name="Tallon L.J."/>
            <person name="Town C.D."/>
            <person name="Daniell H."/>
        </authorList>
    </citation>
    <scope>NUCLEOTIDE SEQUENCE [LARGE SCALE GENOMIC DNA]</scope>
    <source>
        <strain>cv. Danvers Half-long</strain>
    </source>
</reference>